<accession>B0BVL0</accession>
<dbReference type="EC" id="5.4.99.12" evidence="1"/>
<dbReference type="EMBL" id="CP000766">
    <property type="protein sequence ID" value="ABY73270.1"/>
    <property type="molecule type" value="Genomic_DNA"/>
</dbReference>
<dbReference type="RefSeq" id="WP_012151431.1">
    <property type="nucleotide sequence ID" value="NC_010263.3"/>
</dbReference>
<dbReference type="SMR" id="B0BVL0"/>
<dbReference type="GeneID" id="79937925"/>
<dbReference type="KEGG" id="rrj:RrIowa_1553"/>
<dbReference type="eggNOG" id="COG0101">
    <property type="taxonomic scope" value="Bacteria"/>
</dbReference>
<dbReference type="HOGENOM" id="CLU_014673_0_2_5"/>
<dbReference type="Proteomes" id="UP000000796">
    <property type="component" value="Chromosome"/>
</dbReference>
<dbReference type="GO" id="GO:0003723">
    <property type="term" value="F:RNA binding"/>
    <property type="evidence" value="ECO:0007669"/>
    <property type="project" value="InterPro"/>
</dbReference>
<dbReference type="GO" id="GO:0160147">
    <property type="term" value="F:tRNA pseudouridine(38-40) synthase activity"/>
    <property type="evidence" value="ECO:0007669"/>
    <property type="project" value="UniProtKB-EC"/>
</dbReference>
<dbReference type="GO" id="GO:0031119">
    <property type="term" value="P:tRNA pseudouridine synthesis"/>
    <property type="evidence" value="ECO:0007669"/>
    <property type="project" value="UniProtKB-UniRule"/>
</dbReference>
<dbReference type="CDD" id="cd02570">
    <property type="entry name" value="PseudoU_synth_EcTruA"/>
    <property type="match status" value="1"/>
</dbReference>
<dbReference type="FunFam" id="3.30.70.580:FF:000001">
    <property type="entry name" value="tRNA pseudouridine synthase A"/>
    <property type="match status" value="1"/>
</dbReference>
<dbReference type="Gene3D" id="3.30.70.660">
    <property type="entry name" value="Pseudouridine synthase I, catalytic domain, C-terminal subdomain"/>
    <property type="match status" value="1"/>
</dbReference>
<dbReference type="Gene3D" id="3.30.70.580">
    <property type="entry name" value="Pseudouridine synthase I, catalytic domain, N-terminal subdomain"/>
    <property type="match status" value="1"/>
</dbReference>
<dbReference type="HAMAP" id="MF_00171">
    <property type="entry name" value="TruA"/>
    <property type="match status" value="1"/>
</dbReference>
<dbReference type="InterPro" id="IPR020103">
    <property type="entry name" value="PsdUridine_synth_cat_dom_sf"/>
</dbReference>
<dbReference type="InterPro" id="IPR001406">
    <property type="entry name" value="PsdUridine_synth_TruA"/>
</dbReference>
<dbReference type="InterPro" id="IPR020097">
    <property type="entry name" value="PsdUridine_synth_TruA_a/b_dom"/>
</dbReference>
<dbReference type="InterPro" id="IPR020095">
    <property type="entry name" value="PsdUridine_synth_TruA_C"/>
</dbReference>
<dbReference type="InterPro" id="IPR020094">
    <property type="entry name" value="TruA/RsuA/RluB/E/F_N"/>
</dbReference>
<dbReference type="NCBIfam" id="TIGR00071">
    <property type="entry name" value="hisT_truA"/>
    <property type="match status" value="1"/>
</dbReference>
<dbReference type="PANTHER" id="PTHR11142">
    <property type="entry name" value="PSEUDOURIDYLATE SYNTHASE"/>
    <property type="match status" value="1"/>
</dbReference>
<dbReference type="PANTHER" id="PTHR11142:SF0">
    <property type="entry name" value="TRNA PSEUDOURIDINE SYNTHASE-LIKE 1"/>
    <property type="match status" value="1"/>
</dbReference>
<dbReference type="Pfam" id="PF01416">
    <property type="entry name" value="PseudoU_synth_1"/>
    <property type="match status" value="2"/>
</dbReference>
<dbReference type="PIRSF" id="PIRSF001430">
    <property type="entry name" value="tRNA_psdUrid_synth"/>
    <property type="match status" value="1"/>
</dbReference>
<dbReference type="SUPFAM" id="SSF55120">
    <property type="entry name" value="Pseudouridine synthase"/>
    <property type="match status" value="1"/>
</dbReference>
<comment type="function">
    <text evidence="1">Formation of pseudouridine at positions 38, 39 and 40 in the anticodon stem and loop of transfer RNAs.</text>
</comment>
<comment type="catalytic activity">
    <reaction evidence="1">
        <text>uridine(38/39/40) in tRNA = pseudouridine(38/39/40) in tRNA</text>
        <dbReference type="Rhea" id="RHEA:22376"/>
        <dbReference type="Rhea" id="RHEA-COMP:10085"/>
        <dbReference type="Rhea" id="RHEA-COMP:10087"/>
        <dbReference type="ChEBI" id="CHEBI:65314"/>
        <dbReference type="ChEBI" id="CHEBI:65315"/>
        <dbReference type="EC" id="5.4.99.12"/>
    </reaction>
</comment>
<comment type="subunit">
    <text evidence="1">Homodimer.</text>
</comment>
<comment type="similarity">
    <text evidence="1">Belongs to the tRNA pseudouridine synthase TruA family.</text>
</comment>
<sequence>MYRYKITIEYLGTDLAGWQRQAGVMSVQQILEEAIYKFSGEQVILFGAGRTDAGVHAVGQVAHFDLSKYLEPHKIITAINYFVRPYAVGVWNCELAPNNFHARFSATSRYYIYRIINRPYPSVIDLNRAWWISSPLDVPAMQQAAAYLLGKHDFTSFRASSCQSKSPIKTLTELNIIKEDEEIKLYLSAPSFLHHMVRNIVGSLVLVGKNIWQAEQIKDVLEAKDRKAAGPTAPASGLYFVKAAY</sequence>
<feature type="chain" id="PRO_1000077097" description="tRNA pseudouridine synthase A">
    <location>
        <begin position="1"/>
        <end position="245"/>
    </location>
</feature>
<feature type="active site" description="Nucleophile" evidence="1">
    <location>
        <position position="52"/>
    </location>
</feature>
<feature type="binding site" evidence="1">
    <location>
        <position position="111"/>
    </location>
    <ligand>
        <name>substrate</name>
    </ligand>
</feature>
<name>TRUA_RICRO</name>
<gene>
    <name evidence="1" type="primary">truA</name>
    <name type="ordered locus">RrIowa_1553</name>
</gene>
<protein>
    <recommendedName>
        <fullName evidence="1">tRNA pseudouridine synthase A</fullName>
        <ecNumber evidence="1">5.4.99.12</ecNumber>
    </recommendedName>
    <alternativeName>
        <fullName evidence="1">tRNA pseudouridine(38-40) synthase</fullName>
    </alternativeName>
    <alternativeName>
        <fullName evidence="1">tRNA pseudouridylate synthase I</fullName>
    </alternativeName>
    <alternativeName>
        <fullName evidence="1">tRNA-uridine isomerase I</fullName>
    </alternativeName>
</protein>
<evidence type="ECO:0000255" key="1">
    <source>
        <dbReference type="HAMAP-Rule" id="MF_00171"/>
    </source>
</evidence>
<organism>
    <name type="scientific">Rickettsia rickettsii (strain Iowa)</name>
    <dbReference type="NCBI Taxonomy" id="452659"/>
    <lineage>
        <taxon>Bacteria</taxon>
        <taxon>Pseudomonadati</taxon>
        <taxon>Pseudomonadota</taxon>
        <taxon>Alphaproteobacteria</taxon>
        <taxon>Rickettsiales</taxon>
        <taxon>Rickettsiaceae</taxon>
        <taxon>Rickettsieae</taxon>
        <taxon>Rickettsia</taxon>
        <taxon>spotted fever group</taxon>
    </lineage>
</organism>
<keyword id="KW-0413">Isomerase</keyword>
<keyword id="KW-0819">tRNA processing</keyword>
<reference key="1">
    <citation type="journal article" date="2008" name="Infect. Immun.">
        <title>Genomic comparison of virulent Rickettsia rickettsii Sheila Smith and avirulent Rickettsia rickettsii Iowa.</title>
        <authorList>
            <person name="Ellison D.W."/>
            <person name="Clark T.R."/>
            <person name="Sturdevant D.E."/>
            <person name="Virtaneva K."/>
            <person name="Porcella S.F."/>
            <person name="Hackstadt T."/>
        </authorList>
    </citation>
    <scope>NUCLEOTIDE SEQUENCE [LARGE SCALE GENOMIC DNA]</scope>
    <source>
        <strain>Iowa</strain>
    </source>
</reference>
<proteinExistence type="inferred from homology"/>